<dbReference type="EMBL" id="L04669">
    <property type="protein sequence ID" value="AAA35055.1"/>
    <property type="molecule type" value="Genomic_DNA"/>
</dbReference>
<dbReference type="EMBL" id="Z72858">
    <property type="protein sequence ID" value="CAA97076.1"/>
    <property type="molecule type" value="Genomic_DNA"/>
</dbReference>
<dbReference type="EMBL" id="AY692847">
    <property type="protein sequence ID" value="AAT92866.1"/>
    <property type="molecule type" value="Genomic_DNA"/>
</dbReference>
<dbReference type="EMBL" id="BK006941">
    <property type="protein sequence ID" value="DAA08167.1"/>
    <property type="molecule type" value="Genomic_DNA"/>
</dbReference>
<dbReference type="PIR" id="A47264">
    <property type="entry name" value="A47264"/>
</dbReference>
<dbReference type="RefSeq" id="NP_011588.3">
    <property type="nucleotide sequence ID" value="NM_001181203.3"/>
</dbReference>
<dbReference type="PDB" id="3JCM">
    <property type="method" value="EM"/>
    <property type="resolution" value="3.80 A"/>
    <property type="chains" value="P/T=1-146"/>
</dbReference>
<dbReference type="PDB" id="5GAM">
    <property type="method" value="EM"/>
    <property type="resolution" value="3.70 A"/>
    <property type="chains" value="h=1-146"/>
</dbReference>
<dbReference type="PDB" id="5GAN">
    <property type="method" value="EM"/>
    <property type="resolution" value="3.60 A"/>
    <property type="chains" value="h/l=1-146"/>
</dbReference>
<dbReference type="PDB" id="5GAO">
    <property type="method" value="EM"/>
    <property type="resolution" value="3.60 A"/>
    <property type="chains" value="l=1-146"/>
</dbReference>
<dbReference type="PDB" id="5GM6">
    <property type="method" value="EM"/>
    <property type="resolution" value="3.50 A"/>
    <property type="chains" value="m=1-146"/>
</dbReference>
<dbReference type="PDB" id="5GMK">
    <property type="method" value="EM"/>
    <property type="resolution" value="3.40 A"/>
    <property type="chains" value="m/z=1-146"/>
</dbReference>
<dbReference type="PDB" id="5LJ3">
    <property type="method" value="EM"/>
    <property type="resolution" value="3.80 A"/>
    <property type="chains" value="h/l=1-146"/>
</dbReference>
<dbReference type="PDB" id="5LJ5">
    <property type="method" value="EM"/>
    <property type="resolution" value="3.80 A"/>
    <property type="chains" value="h/l=1-146"/>
</dbReference>
<dbReference type="PDB" id="5LQW">
    <property type="method" value="EM"/>
    <property type="resolution" value="5.80 A"/>
    <property type="chains" value="h=1-146"/>
</dbReference>
<dbReference type="PDB" id="5MPS">
    <property type="method" value="EM"/>
    <property type="resolution" value="3.85 A"/>
    <property type="chains" value="h=1-146"/>
</dbReference>
<dbReference type="PDB" id="5MQ0">
    <property type="method" value="EM"/>
    <property type="resolution" value="4.17 A"/>
    <property type="chains" value="h/l=1-146"/>
</dbReference>
<dbReference type="PDB" id="5NRL">
    <property type="method" value="EM"/>
    <property type="resolution" value="7.20 A"/>
    <property type="chains" value="h/l/t=1-146"/>
</dbReference>
<dbReference type="PDB" id="5WSG">
    <property type="method" value="EM"/>
    <property type="resolution" value="4.00 A"/>
    <property type="chains" value="V/m=1-146"/>
</dbReference>
<dbReference type="PDB" id="5Y88">
    <property type="method" value="EM"/>
    <property type="resolution" value="3.70 A"/>
    <property type="chains" value="f/m=1-146"/>
</dbReference>
<dbReference type="PDB" id="5YLZ">
    <property type="method" value="EM"/>
    <property type="resolution" value="3.60 A"/>
    <property type="chains" value="f/m=1-146"/>
</dbReference>
<dbReference type="PDB" id="5ZWM">
    <property type="method" value="EM"/>
    <property type="resolution" value="3.40 A"/>
    <property type="chains" value="Q/b/m=1-146"/>
</dbReference>
<dbReference type="PDB" id="5ZWN">
    <property type="method" value="EM"/>
    <property type="resolution" value="3.30 A"/>
    <property type="chains" value="b=1-146"/>
</dbReference>
<dbReference type="PDB" id="5ZWO">
    <property type="method" value="EM"/>
    <property type="resolution" value="3.90 A"/>
    <property type="chains" value="Q/b/m=1-146"/>
</dbReference>
<dbReference type="PDB" id="6BK8">
    <property type="method" value="EM"/>
    <property type="resolution" value="3.30 A"/>
    <property type="chains" value="h/p=1-146"/>
</dbReference>
<dbReference type="PDB" id="6EXN">
    <property type="method" value="EM"/>
    <property type="resolution" value="3.70 A"/>
    <property type="chains" value="h/l=1-146"/>
</dbReference>
<dbReference type="PDB" id="6G90">
    <property type="method" value="EM"/>
    <property type="resolution" value="4.00 A"/>
    <property type="chains" value="h/t=1-146"/>
</dbReference>
<dbReference type="PDB" id="6J6G">
    <property type="method" value="EM"/>
    <property type="resolution" value="3.20 A"/>
    <property type="chains" value="m/z=1-146"/>
</dbReference>
<dbReference type="PDB" id="6J6H">
    <property type="method" value="EM"/>
    <property type="resolution" value="3.60 A"/>
    <property type="chains" value="m/z=1-146"/>
</dbReference>
<dbReference type="PDB" id="6J6N">
    <property type="method" value="EM"/>
    <property type="resolution" value="3.86 A"/>
    <property type="chains" value="m/z=1-146"/>
</dbReference>
<dbReference type="PDB" id="6J6Q">
    <property type="method" value="EM"/>
    <property type="resolution" value="3.70 A"/>
    <property type="chains" value="m/z=1-146"/>
</dbReference>
<dbReference type="PDB" id="6N7P">
    <property type="method" value="EM"/>
    <property type="resolution" value="3.60 A"/>
    <property type="chains" value="L=1-146"/>
</dbReference>
<dbReference type="PDB" id="6N7R">
    <property type="method" value="EM"/>
    <property type="resolution" value="3.20 A"/>
    <property type="chains" value="L=1-146"/>
</dbReference>
<dbReference type="PDB" id="6N7X">
    <property type="method" value="EM"/>
    <property type="resolution" value="3.60 A"/>
    <property type="chains" value="L=1-146"/>
</dbReference>
<dbReference type="PDB" id="7B9V">
    <property type="method" value="EM"/>
    <property type="resolution" value="2.80 A"/>
    <property type="chains" value="h/l=1-146"/>
</dbReference>
<dbReference type="PDB" id="7OQB">
    <property type="method" value="EM"/>
    <property type="resolution" value="9.00 A"/>
    <property type="chains" value="t=1-146"/>
</dbReference>
<dbReference type="PDB" id="7OQC">
    <property type="method" value="EM"/>
    <property type="resolution" value="4.10 A"/>
    <property type="chains" value="h=1-146"/>
</dbReference>
<dbReference type="PDB" id="7OQE">
    <property type="method" value="EM"/>
    <property type="resolution" value="5.90 A"/>
    <property type="chains" value="h/t=1-146"/>
</dbReference>
<dbReference type="PDB" id="8W2O">
    <property type="method" value="EM"/>
    <property type="resolution" value="3.49 A"/>
    <property type="chains" value="L=1-146"/>
</dbReference>
<dbReference type="PDB" id="9DTR">
    <property type="method" value="EM"/>
    <property type="resolution" value="2.31 A"/>
    <property type="chains" value="h/l=1-146"/>
</dbReference>
<dbReference type="PDBsum" id="3JCM"/>
<dbReference type="PDBsum" id="5GAM"/>
<dbReference type="PDBsum" id="5GAN"/>
<dbReference type="PDBsum" id="5GAO"/>
<dbReference type="PDBsum" id="5GM6"/>
<dbReference type="PDBsum" id="5GMK"/>
<dbReference type="PDBsum" id="5LJ3"/>
<dbReference type="PDBsum" id="5LJ5"/>
<dbReference type="PDBsum" id="5LQW"/>
<dbReference type="PDBsum" id="5MPS"/>
<dbReference type="PDBsum" id="5MQ0"/>
<dbReference type="PDBsum" id="5NRL"/>
<dbReference type="PDBsum" id="5WSG"/>
<dbReference type="PDBsum" id="5Y88"/>
<dbReference type="PDBsum" id="5YLZ"/>
<dbReference type="PDBsum" id="5ZWM"/>
<dbReference type="PDBsum" id="5ZWN"/>
<dbReference type="PDBsum" id="5ZWO"/>
<dbReference type="PDBsum" id="6BK8"/>
<dbReference type="PDBsum" id="6EXN"/>
<dbReference type="PDBsum" id="6G90"/>
<dbReference type="PDBsum" id="6J6G"/>
<dbReference type="PDBsum" id="6J6H"/>
<dbReference type="PDBsum" id="6J6N"/>
<dbReference type="PDBsum" id="6J6Q"/>
<dbReference type="PDBsum" id="6N7P"/>
<dbReference type="PDBsum" id="6N7R"/>
<dbReference type="PDBsum" id="6N7X"/>
<dbReference type="PDBsum" id="7B9V"/>
<dbReference type="PDBsum" id="7OQB"/>
<dbReference type="PDBsum" id="7OQC"/>
<dbReference type="PDBsum" id="7OQE"/>
<dbReference type="PDBsum" id="8W2O"/>
<dbReference type="PDBsum" id="9DTR"/>
<dbReference type="EMDB" id="EMD-0360"/>
<dbReference type="EMDB" id="EMD-0361"/>
<dbReference type="EMDB" id="EMD-0686"/>
<dbReference type="EMDB" id="EMD-0687"/>
<dbReference type="EMDB" id="EMD-0691"/>
<dbReference type="EMDB" id="EMD-0692"/>
<dbReference type="EMDB" id="EMD-12106"/>
<dbReference type="EMDB" id="EMD-13028"/>
<dbReference type="EMDB" id="EMD-13029"/>
<dbReference type="EMDB" id="EMD-13033"/>
<dbReference type="EMDB" id="EMD-3539"/>
<dbReference type="EMDB" id="EMD-3541"/>
<dbReference type="EMDB" id="EMD-3683"/>
<dbReference type="EMDB" id="EMD-3979"/>
<dbReference type="EMDB" id="EMD-4055"/>
<dbReference type="EMDB" id="EMD-4057"/>
<dbReference type="EMDB" id="EMD-4364"/>
<dbReference type="EMDB" id="EMD-43753"/>
<dbReference type="EMDB" id="EMD-47157"/>
<dbReference type="EMDB" id="EMD-6817"/>
<dbReference type="EMDB" id="EMD-6839"/>
<dbReference type="EMDB" id="EMD-6972"/>
<dbReference type="EMDB" id="EMD-6973"/>
<dbReference type="EMDB" id="EMD-6974"/>
<dbReference type="EMDB" id="EMD-7109"/>
<dbReference type="EMDB" id="EMD-8011"/>
<dbReference type="EMDB" id="EMD-8012"/>
<dbReference type="EMDB" id="EMD-8013"/>
<dbReference type="EMDB" id="EMD-8622"/>
<dbReference type="EMDB" id="EMD-9524"/>
<dbReference type="EMDB" id="EMD-9525"/>
<dbReference type="SMR" id="Q02260"/>
<dbReference type="BioGRID" id="33316">
    <property type="interactions" value="410"/>
</dbReference>
<dbReference type="ComplexPortal" id="CPX-1651">
    <property type="entry name" value="PRP19-associated complex"/>
</dbReference>
<dbReference type="ComplexPortal" id="CPX-23">
    <property type="entry name" value="U1 small nuclear ribonucleoprotein complex"/>
</dbReference>
<dbReference type="ComplexPortal" id="CPX-25">
    <property type="entry name" value="U4/U6.U5 tri-small nuclear ribonucleoprotein complex"/>
</dbReference>
<dbReference type="ComplexPortal" id="CPX-26">
    <property type="entry name" value="U2 small nuclear ribonucleoprotein complex"/>
</dbReference>
<dbReference type="ComplexPortal" id="CPX-29">
    <property type="entry name" value="U5 small nuclear ribonucleoprotein complex"/>
</dbReference>
<dbReference type="ComplexPortal" id="CPX-30">
    <property type="entry name" value="U5 small nuclear ribonucleoprotein complex, AAR2 variant"/>
</dbReference>
<dbReference type="ComplexPortal" id="CPX-31">
    <property type="entry name" value="U4 small nuclear ribonucleoprotein complex"/>
</dbReference>
<dbReference type="ComplexPortal" id="CPX-32">
    <property type="entry name" value="U4/U6 small nuclear ribonucleoprotein complex"/>
</dbReference>
<dbReference type="ComplexPortal" id="CPX-43">
    <property type="entry name" value="Sm complex"/>
</dbReference>
<dbReference type="DIP" id="DIP-227N"/>
<dbReference type="FunCoup" id="Q02260">
    <property type="interactions" value="1320"/>
</dbReference>
<dbReference type="IntAct" id="Q02260">
    <property type="interactions" value="62"/>
</dbReference>
<dbReference type="MINT" id="Q02260"/>
<dbReference type="STRING" id="4932.YGR074W"/>
<dbReference type="iPTMnet" id="Q02260"/>
<dbReference type="PaxDb" id="4932-YGR074W"/>
<dbReference type="PeptideAtlas" id="Q02260"/>
<dbReference type="EnsemblFungi" id="YGR074W_mRNA">
    <property type="protein sequence ID" value="YGR074W"/>
    <property type="gene ID" value="YGR074W"/>
</dbReference>
<dbReference type="GeneID" id="852964"/>
<dbReference type="KEGG" id="sce:YGR074W"/>
<dbReference type="AGR" id="SGD:S000003306"/>
<dbReference type="SGD" id="S000003306">
    <property type="gene designation" value="SMD1"/>
</dbReference>
<dbReference type="VEuPathDB" id="FungiDB:YGR074W"/>
<dbReference type="eggNOG" id="KOG3428">
    <property type="taxonomic scope" value="Eukaryota"/>
</dbReference>
<dbReference type="HOGENOM" id="CLU_123956_2_0_1"/>
<dbReference type="InParanoid" id="Q02260"/>
<dbReference type="OMA" id="WGTLQTV"/>
<dbReference type="OrthoDB" id="9626941at2759"/>
<dbReference type="BioCyc" id="YEAST:G3O-30786-MONOMER"/>
<dbReference type="BioGRID-ORCS" id="852964">
    <property type="hits" value="6 hits in 10 CRISPR screens"/>
</dbReference>
<dbReference type="EvolutionaryTrace" id="Q02260"/>
<dbReference type="PRO" id="PR:Q02260"/>
<dbReference type="Proteomes" id="UP000002311">
    <property type="component" value="Chromosome VII"/>
</dbReference>
<dbReference type="RNAct" id="Q02260">
    <property type="molecule type" value="protein"/>
</dbReference>
<dbReference type="GO" id="GO:0071013">
    <property type="term" value="C:catalytic step 2 spliceosome"/>
    <property type="evidence" value="ECO:0000318"/>
    <property type="project" value="GO_Central"/>
</dbReference>
<dbReference type="GO" id="GO:0000243">
    <property type="term" value="C:commitment complex"/>
    <property type="evidence" value="ECO:0000353"/>
    <property type="project" value="SGD"/>
</dbReference>
<dbReference type="GO" id="GO:0005737">
    <property type="term" value="C:cytoplasm"/>
    <property type="evidence" value="ECO:0000303"/>
    <property type="project" value="ComplexPortal"/>
</dbReference>
<dbReference type="GO" id="GO:0005829">
    <property type="term" value="C:cytosol"/>
    <property type="evidence" value="ECO:0000314"/>
    <property type="project" value="SGD"/>
</dbReference>
<dbReference type="GO" id="GO:0005634">
    <property type="term" value="C:nucleus"/>
    <property type="evidence" value="ECO:0000314"/>
    <property type="project" value="SGD"/>
</dbReference>
<dbReference type="GO" id="GO:0034715">
    <property type="term" value="C:pICln-Sm protein complex"/>
    <property type="evidence" value="ECO:0000318"/>
    <property type="project" value="GO_Central"/>
</dbReference>
<dbReference type="GO" id="GO:0071011">
    <property type="term" value="C:precatalytic spliceosome"/>
    <property type="evidence" value="ECO:0000318"/>
    <property type="project" value="GO_Central"/>
</dbReference>
<dbReference type="GO" id="GO:0000974">
    <property type="term" value="C:Prp19 complex"/>
    <property type="evidence" value="ECO:0000353"/>
    <property type="project" value="ComplexPortal"/>
</dbReference>
<dbReference type="GO" id="GO:0030532">
    <property type="term" value="C:small nuclear ribonucleoprotein complex"/>
    <property type="evidence" value="ECO:0000315"/>
    <property type="project" value="UniProtKB"/>
</dbReference>
<dbReference type="GO" id="GO:0034719">
    <property type="term" value="C:SMN-Sm protein complex"/>
    <property type="evidence" value="ECO:0000318"/>
    <property type="project" value="GO_Central"/>
</dbReference>
<dbReference type="GO" id="GO:0005681">
    <property type="term" value="C:spliceosomal complex"/>
    <property type="evidence" value="ECO:0000303"/>
    <property type="project" value="ComplexPortal"/>
</dbReference>
<dbReference type="GO" id="GO:0097526">
    <property type="term" value="C:spliceosomal tri-snRNP complex"/>
    <property type="evidence" value="ECO:0000318"/>
    <property type="project" value="GO_Central"/>
</dbReference>
<dbReference type="GO" id="GO:0005685">
    <property type="term" value="C:U1 snRNP"/>
    <property type="evidence" value="ECO:0000314"/>
    <property type="project" value="SGD"/>
</dbReference>
<dbReference type="GO" id="GO:0005686">
    <property type="term" value="C:U2 snRNP"/>
    <property type="evidence" value="ECO:0000318"/>
    <property type="project" value="GO_Central"/>
</dbReference>
<dbReference type="GO" id="GO:0071004">
    <property type="term" value="C:U2-type prespliceosome"/>
    <property type="evidence" value="ECO:0000314"/>
    <property type="project" value="SGD"/>
</dbReference>
<dbReference type="GO" id="GO:0005687">
    <property type="term" value="C:U4 snRNP"/>
    <property type="evidence" value="ECO:0000353"/>
    <property type="project" value="ComplexPortal"/>
</dbReference>
<dbReference type="GO" id="GO:0071001">
    <property type="term" value="C:U4/U6 snRNP"/>
    <property type="evidence" value="ECO:0000303"/>
    <property type="project" value="ComplexPortal"/>
</dbReference>
<dbReference type="GO" id="GO:0046540">
    <property type="term" value="C:U4/U6 x U5 tri-snRNP complex"/>
    <property type="evidence" value="ECO:0000314"/>
    <property type="project" value="SGD"/>
</dbReference>
<dbReference type="GO" id="GO:0005682">
    <property type="term" value="C:U5 snRNP"/>
    <property type="evidence" value="ECO:0000314"/>
    <property type="project" value="SGD"/>
</dbReference>
<dbReference type="GO" id="GO:0003729">
    <property type="term" value="F:mRNA binding"/>
    <property type="evidence" value="ECO:0000353"/>
    <property type="project" value="SGD"/>
</dbReference>
<dbReference type="GO" id="GO:0003723">
    <property type="term" value="F:RNA binding"/>
    <property type="evidence" value="ECO:0000318"/>
    <property type="project" value="GO_Central"/>
</dbReference>
<dbReference type="GO" id="GO:0036261">
    <property type="term" value="P:7-methylguanosine cap hypermethylation"/>
    <property type="evidence" value="ECO:0000315"/>
    <property type="project" value="ComplexPortal"/>
</dbReference>
<dbReference type="GO" id="GO:0000395">
    <property type="term" value="P:mRNA 5'-splice site recognition"/>
    <property type="evidence" value="ECO:0000303"/>
    <property type="project" value="ComplexPortal"/>
</dbReference>
<dbReference type="GO" id="GO:0000398">
    <property type="term" value="P:mRNA splicing, via spliceosome"/>
    <property type="evidence" value="ECO:0000315"/>
    <property type="project" value="UniProtKB"/>
</dbReference>
<dbReference type="GO" id="GO:0000245">
    <property type="term" value="P:spliceosomal complex assembly"/>
    <property type="evidence" value="ECO:0000303"/>
    <property type="project" value="ComplexPortal"/>
</dbReference>
<dbReference type="GO" id="GO:0000387">
    <property type="term" value="P:spliceosomal snRNP assembly"/>
    <property type="evidence" value="ECO:0000318"/>
    <property type="project" value="GO_Central"/>
</dbReference>
<dbReference type="GO" id="GO:1903241">
    <property type="term" value="P:U2-type prespliceosome assembly"/>
    <property type="evidence" value="ECO:0000303"/>
    <property type="project" value="ComplexPortal"/>
</dbReference>
<dbReference type="FunFam" id="2.30.30.100:FF:000050">
    <property type="entry name" value="Small nuclear ribonucleoprotein Sm D1"/>
    <property type="match status" value="1"/>
</dbReference>
<dbReference type="Gene3D" id="2.30.30.100">
    <property type="match status" value="1"/>
</dbReference>
<dbReference type="InterPro" id="IPR027141">
    <property type="entry name" value="LSm4/Sm_D1/D3"/>
</dbReference>
<dbReference type="InterPro" id="IPR010920">
    <property type="entry name" value="LSM_dom_sf"/>
</dbReference>
<dbReference type="InterPro" id="IPR047575">
    <property type="entry name" value="Sm"/>
</dbReference>
<dbReference type="InterPro" id="IPR001163">
    <property type="entry name" value="Sm_dom_euk/arc"/>
</dbReference>
<dbReference type="PANTHER" id="PTHR23338">
    <property type="entry name" value="SMALL NUCLEAR RIBONUCLEOPROTEIN SM"/>
    <property type="match status" value="1"/>
</dbReference>
<dbReference type="Pfam" id="PF01423">
    <property type="entry name" value="LSM"/>
    <property type="match status" value="1"/>
</dbReference>
<dbReference type="SMART" id="SM00651">
    <property type="entry name" value="Sm"/>
    <property type="match status" value="1"/>
</dbReference>
<dbReference type="SUPFAM" id="SSF50182">
    <property type="entry name" value="Sm-like ribonucleoproteins"/>
    <property type="match status" value="1"/>
</dbReference>
<dbReference type="PROSITE" id="PS52002">
    <property type="entry name" value="SM"/>
    <property type="match status" value="1"/>
</dbReference>
<keyword id="KW-0002">3D-structure</keyword>
<keyword id="KW-0963">Cytoplasm</keyword>
<keyword id="KW-0903">Direct protein sequencing</keyword>
<keyword id="KW-0507">mRNA processing</keyword>
<keyword id="KW-0508">mRNA splicing</keyword>
<keyword id="KW-0539">Nucleus</keyword>
<keyword id="KW-1185">Reference proteome</keyword>
<keyword id="KW-0687">Ribonucleoprotein</keyword>
<keyword id="KW-0694">RNA-binding</keyword>
<organism>
    <name type="scientific">Saccharomyces cerevisiae (strain ATCC 204508 / S288c)</name>
    <name type="common">Baker's yeast</name>
    <dbReference type="NCBI Taxonomy" id="559292"/>
    <lineage>
        <taxon>Eukaryota</taxon>
        <taxon>Fungi</taxon>
        <taxon>Dikarya</taxon>
        <taxon>Ascomycota</taxon>
        <taxon>Saccharomycotina</taxon>
        <taxon>Saccharomycetes</taxon>
        <taxon>Saccharomycetales</taxon>
        <taxon>Saccharomycetaceae</taxon>
        <taxon>Saccharomyces</taxon>
    </lineage>
</organism>
<accession>Q02260</accession>
<accession>D6VUK6</accession>
<proteinExistence type="evidence at protein level"/>
<feature type="chain" id="PRO_0000122206" description="Small nuclear ribonucleoprotein Sm D1">
    <location>
        <begin position="1"/>
        <end position="146"/>
    </location>
</feature>
<feature type="domain" description="Sm" evidence="3">
    <location>
        <begin position="2"/>
        <end position="101"/>
    </location>
</feature>
<feature type="region of interest" description="Disordered" evidence="4">
    <location>
        <begin position="118"/>
        <end position="146"/>
    </location>
</feature>
<feature type="short sequence motif" description="Nuclear localization signal" evidence="2">
    <location>
        <begin position="128"/>
        <end position="144"/>
    </location>
</feature>
<feature type="helix" evidence="13">
    <location>
        <begin position="3"/>
        <end position="7"/>
    </location>
</feature>
<feature type="strand" evidence="13">
    <location>
        <begin position="13"/>
        <end position="19"/>
    </location>
</feature>
<feature type="strand" evidence="13">
    <location>
        <begin position="24"/>
        <end position="32"/>
    </location>
</feature>
<feature type="strand" evidence="13">
    <location>
        <begin position="38"/>
        <end position="46"/>
    </location>
</feature>
<feature type="helix" evidence="13">
    <location>
        <begin position="49"/>
        <end position="53"/>
    </location>
</feature>
<feature type="helix" evidence="13">
    <location>
        <begin position="55"/>
        <end position="67"/>
    </location>
</feature>
<feature type="strand" evidence="13">
    <location>
        <begin position="79"/>
        <end position="87"/>
    </location>
</feature>
<feature type="helix" evidence="13">
    <location>
        <begin position="89"/>
        <end position="91"/>
    </location>
</feature>
<feature type="strand" evidence="13">
    <location>
        <begin position="92"/>
        <end position="96"/>
    </location>
</feature>
<feature type="strand" evidence="12">
    <location>
        <begin position="99"/>
        <end position="101"/>
    </location>
</feature>
<feature type="helix" evidence="13">
    <location>
        <begin position="103"/>
        <end position="106"/>
    </location>
</feature>
<feature type="helix" evidence="12">
    <location>
        <begin position="110"/>
        <end position="118"/>
    </location>
</feature>
<protein>
    <recommendedName>
        <fullName>Small nuclear ribonucleoprotein Sm D1</fullName>
        <shortName>Sm-D1</shortName>
    </recommendedName>
    <alternativeName>
        <fullName>snRNP core protein D1</fullName>
    </alternativeName>
</protein>
<gene>
    <name type="primary">SMD1</name>
    <name type="ordered locus">YGR074W</name>
</gene>
<sequence>MKLVNFLKKLRNEQVTIELKNGTTVWGTLQSVSPQMNAILTDVKLTLPQPRLNKLNSNGIAMASLYLTGGQQPTASDNIASLQYINIRGNTIRQIILPDSLNLDSLLVDQKQLNSLRRSGQIANDPSKKRRRDFGAPANKRPRRGL</sequence>
<name>SMD1_YEAST</name>
<comment type="function">
    <text evidence="6 10">lays a role in pre-mRNA splicing as a core component of the spliceosomal U1, U2, U4 and U5 small nuclear ribonucleoproteins (snRNPs), the building blocks of the spliceosome (PubMed:8430095). Also binds telomerase RNA and is required for its accumulation (PubMed:10490028).</text>
</comment>
<comment type="subunit">
    <text evidence="5 7 8">Component of the Sm core complex, present in spliceosomal snRNP U1, U2, U4/U6 and U5. The core complex contains SMB1, SMD1, SMD2, SMD3, SME1, SMX3 and SMX2 (Sm proteins B, D1, D2, D3, E, F and G, respectively), and is probably a heptameric ring structure. Belongs to the CWC complex (or CEF1-associated complex), a spliceosome sub-complex reminiscent of a late-stage spliceosome composed of the U2, U5 and U6 snRNAs and at least BUD13, BUD31, BRR2, CDC40, CEF1, CLF1, CUS1, CWC2, CWC15, CWC21, CWC22, CWC23, CWC24, CWC25, CWC27, ECM2, HSH155, IST3, ISY1, LEA1, MSL1, NTC20, PRP8, PRP9, PRP11, PRP19, PRP21, PRP22, PRP45, PRP46, SLU7, SMB1, SMD1, SMD2, SMD3, SMX2, SMX3, SNT309, SNU114, SPP2, SYF1, SYF2, RSE1 and YJU2. Component of the U4/U6-U5 tri-snRNP complex composed of the U4, U6 and U5 snRNAs and at least PRP3, PRP4, PRP6, PRP8, PRP18, PRP31, PRP38, SNU13, SNU23, SNU66, SNU114, SPP381, SMB1, SMD1, SMD2, SMD3, SMX2, SMX3, LSM2, LSM3, LSM4, LSM5, LSM6, LSM7, LSM8, BRR2 and DIB1.</text>
</comment>
<comment type="subcellular location">
    <subcellularLocation>
        <location evidence="1">Nucleus</location>
    </subcellularLocation>
    <subcellularLocation>
        <location evidence="1">Cytoplasm</location>
    </subcellularLocation>
</comment>
<comment type="domain">
    <text>C-terminal extension may function as a nuclear localization signal (NLS).</text>
</comment>
<comment type="miscellaneous">
    <text evidence="9">Present with 2400 molecules/cell in log phase SD medium.</text>
</comment>
<comment type="similarity">
    <text evidence="11">Belongs to the snRNP core protein family.</text>
</comment>
<reference key="1">
    <citation type="journal article" date="1993" name="Proc. Natl. Acad. Sci. U.S.A.">
        <title>Convergent transcripts of the yeast PRP38-SMD1 locus encode two essential splicing factors, including the D1 core polypeptide of small nuclear ribonucleoprotein particles.</title>
        <authorList>
            <person name="Rymond B.C."/>
        </authorList>
    </citation>
    <scope>NUCLEOTIDE SEQUENCE [GENOMIC DNA]</scope>
    <scope>FUNCTION</scope>
    <source>
        <strain>S288c / GRF88</strain>
    </source>
</reference>
<reference key="2">
    <citation type="journal article" date="1998" name="Mol. Cell. Biol.">
        <title>Interactions within the yeast Sm core complex: from proteins to amino acids.</title>
        <authorList>
            <person name="Camasses A."/>
            <person name="Bragado-Nilsson E."/>
            <person name="Martin R."/>
            <person name="Seraphin B."/>
            <person name="Bordonne R."/>
        </authorList>
    </citation>
    <scope>NUCLEOTIDE SEQUENCE [GENOMIC DNA]</scope>
</reference>
<reference key="3">
    <citation type="journal article" date="1999" name="EMBO J.">
        <title>Sm and Sm-like proteins assemble in two related complexes of deep evolutionary origin.</title>
        <authorList>
            <person name="Salgado-Garrido J."/>
            <person name="Bragado-Nilsson E."/>
            <person name="Kandels-Lewis S."/>
            <person name="Seraphin B."/>
        </authorList>
    </citation>
    <scope>NUCLEOTIDE SEQUENCE [GENOMIC DNA]</scope>
    <scope>RNA-BINDING</scope>
</reference>
<reference key="4">
    <citation type="journal article" date="1999" name="Nature">
        <title>Saccharomyces cerevisiae telomerase is an Sm small nuclear ribonucleoprotein particle.</title>
        <authorList>
            <person name="Seto A.G."/>
            <person name="Zaug A.J."/>
            <person name="Sobel S.G."/>
            <person name="Wolin S.L."/>
            <person name="Cech T.R."/>
        </authorList>
    </citation>
    <scope>NUCLEOTIDE SEQUENCE [GENOMIC DNA]</scope>
    <scope>FUNCTION</scope>
</reference>
<reference key="5">
    <citation type="journal article" date="1997" name="Nature">
        <title>The nucleotide sequence of Saccharomyces cerevisiae chromosome VII.</title>
        <authorList>
            <person name="Tettelin H."/>
            <person name="Agostoni-Carbone M.L."/>
            <person name="Albermann K."/>
            <person name="Albers M."/>
            <person name="Arroyo J."/>
            <person name="Backes U."/>
            <person name="Barreiros T."/>
            <person name="Bertani I."/>
            <person name="Bjourson A.J."/>
            <person name="Brueckner M."/>
            <person name="Bruschi C.V."/>
            <person name="Carignani G."/>
            <person name="Castagnoli L."/>
            <person name="Cerdan E."/>
            <person name="Clemente M.L."/>
            <person name="Coblenz A."/>
            <person name="Coglievina M."/>
            <person name="Coissac E."/>
            <person name="Defoor E."/>
            <person name="Del Bino S."/>
            <person name="Delius H."/>
            <person name="Delneri D."/>
            <person name="de Wergifosse P."/>
            <person name="Dujon B."/>
            <person name="Durand P."/>
            <person name="Entian K.-D."/>
            <person name="Eraso P."/>
            <person name="Escribano V."/>
            <person name="Fabiani L."/>
            <person name="Fartmann B."/>
            <person name="Feroli F."/>
            <person name="Feuermann M."/>
            <person name="Frontali L."/>
            <person name="Garcia-Gonzalez M."/>
            <person name="Garcia-Saez M.I."/>
            <person name="Goffeau A."/>
            <person name="Guerreiro P."/>
            <person name="Hani J."/>
            <person name="Hansen M."/>
            <person name="Hebling U."/>
            <person name="Hernandez K."/>
            <person name="Heumann K."/>
            <person name="Hilger F."/>
            <person name="Hofmann B."/>
            <person name="Indge K.J."/>
            <person name="James C.M."/>
            <person name="Klima R."/>
            <person name="Koetter P."/>
            <person name="Kramer B."/>
            <person name="Kramer W."/>
            <person name="Lauquin G."/>
            <person name="Leuther H."/>
            <person name="Louis E.J."/>
            <person name="Maillier E."/>
            <person name="Marconi A."/>
            <person name="Martegani E."/>
            <person name="Mazon M.J."/>
            <person name="Mazzoni C."/>
            <person name="McReynolds A.D.K."/>
            <person name="Melchioretto P."/>
            <person name="Mewes H.-W."/>
            <person name="Minenkova O."/>
            <person name="Mueller-Auer S."/>
            <person name="Nawrocki A."/>
            <person name="Netter P."/>
            <person name="Neu R."/>
            <person name="Nombela C."/>
            <person name="Oliver S.G."/>
            <person name="Panzeri L."/>
            <person name="Paoluzi S."/>
            <person name="Plevani P."/>
            <person name="Portetelle D."/>
            <person name="Portillo F."/>
            <person name="Potier S."/>
            <person name="Purnelle B."/>
            <person name="Rieger M."/>
            <person name="Riles L."/>
            <person name="Rinaldi T."/>
            <person name="Robben J."/>
            <person name="Rodrigues-Pousada C."/>
            <person name="Rodriguez-Belmonte E."/>
            <person name="Rodriguez-Torres A.M."/>
            <person name="Rose M."/>
            <person name="Ruzzi M."/>
            <person name="Saliola M."/>
            <person name="Sanchez-Perez M."/>
            <person name="Schaefer B."/>
            <person name="Schaefer M."/>
            <person name="Scharfe M."/>
            <person name="Schmidheini T."/>
            <person name="Schreer A."/>
            <person name="Skala J."/>
            <person name="Souciet J.-L."/>
            <person name="Steensma H.Y."/>
            <person name="Talla E."/>
            <person name="Thierry A."/>
            <person name="Vandenbol M."/>
            <person name="van der Aart Q.J.M."/>
            <person name="Van Dyck L."/>
            <person name="Vanoni M."/>
            <person name="Verhasselt P."/>
            <person name="Voet M."/>
            <person name="Volckaert G."/>
            <person name="Wambutt R."/>
            <person name="Watson M.D."/>
            <person name="Weber N."/>
            <person name="Wedler E."/>
            <person name="Wedler H."/>
            <person name="Wipfli P."/>
            <person name="Wolf K."/>
            <person name="Wright L.F."/>
            <person name="Zaccaria P."/>
            <person name="Zimmermann M."/>
            <person name="Zollner A."/>
            <person name="Kleine K."/>
        </authorList>
    </citation>
    <scope>NUCLEOTIDE SEQUENCE [LARGE SCALE GENOMIC DNA]</scope>
    <source>
        <strain>ATCC 204508 / S288c</strain>
    </source>
</reference>
<reference key="6">
    <citation type="journal article" date="2014" name="G3 (Bethesda)">
        <title>The reference genome sequence of Saccharomyces cerevisiae: Then and now.</title>
        <authorList>
            <person name="Engel S.R."/>
            <person name="Dietrich F.S."/>
            <person name="Fisk D.G."/>
            <person name="Binkley G."/>
            <person name="Balakrishnan R."/>
            <person name="Costanzo M.C."/>
            <person name="Dwight S.S."/>
            <person name="Hitz B.C."/>
            <person name="Karra K."/>
            <person name="Nash R.S."/>
            <person name="Weng S."/>
            <person name="Wong E.D."/>
            <person name="Lloyd P."/>
            <person name="Skrzypek M.S."/>
            <person name="Miyasato S.R."/>
            <person name="Simison M."/>
            <person name="Cherry J.M."/>
        </authorList>
    </citation>
    <scope>GENOME REANNOTATION</scope>
    <source>
        <strain>ATCC 204508 / S288c</strain>
    </source>
</reference>
<reference key="7">
    <citation type="journal article" date="2007" name="Genome Res.">
        <title>Approaching a complete repository of sequence-verified protein-encoding clones for Saccharomyces cerevisiae.</title>
        <authorList>
            <person name="Hu Y."/>
            <person name="Rolfs A."/>
            <person name="Bhullar B."/>
            <person name="Murthy T.V.S."/>
            <person name="Zhu C."/>
            <person name="Berger M.F."/>
            <person name="Camargo A.A."/>
            <person name="Kelley F."/>
            <person name="McCarron S."/>
            <person name="Jepson D."/>
            <person name="Richardson A."/>
            <person name="Raphael J."/>
            <person name="Moreira D."/>
            <person name="Taycher E."/>
            <person name="Zuo D."/>
            <person name="Mohr S."/>
            <person name="Kane M.F."/>
            <person name="Williamson J."/>
            <person name="Simpson A.J.G."/>
            <person name="Bulyk M.L."/>
            <person name="Harlow E."/>
            <person name="Marsischky G."/>
            <person name="Kolodner R.D."/>
            <person name="LaBaer J."/>
        </authorList>
    </citation>
    <scope>NUCLEOTIDE SEQUENCE [GENOMIC DNA]</scope>
    <source>
        <strain>ATCC 204508 / S288c</strain>
    </source>
</reference>
<reference key="8">
    <citation type="journal article" date="1997" name="Proc. Natl. Acad. Sci. U.S.A.">
        <title>Identification of the proteins of the yeast U1 small nuclear ribonucleoprotein complex by mass spectrometry.</title>
        <authorList>
            <person name="Neubauer G."/>
            <person name="Gottschalk A."/>
            <person name="Fabrizio P."/>
            <person name="Seraphin B."/>
            <person name="Luehrmann R."/>
            <person name="Mann M."/>
        </authorList>
    </citation>
    <scope>PARTIAL PROTEIN SEQUENCE</scope>
</reference>
<reference key="9">
    <citation type="journal article" date="1999" name="EMBO J.">
        <title>Identification by mass spectrometry and functional analysis of novel proteins of the yeast [U4/U6.U5] tri-snRNP.</title>
        <authorList>
            <person name="Gottschalk A."/>
            <person name="Neubauer G."/>
            <person name="Banroques J."/>
            <person name="Mann M."/>
            <person name="Luehrmann R."/>
            <person name="Fabrizio P."/>
        </authorList>
    </citation>
    <scope>SUBUNIT</scope>
    <scope>IDENTIFICATION IN THE U4/U5/U6 TRI-SNRNP COMPLEX</scope>
    <scope>IDENTIFICATION BY MASS SPECTROMETRY</scope>
</reference>
<reference key="10">
    <citation type="journal article" date="2000" name="Mol. Cell. Biol.">
        <title>Functional characterization of nuclear localization signals in yeast Sm proteins.</title>
        <authorList>
            <person name="Bordonne R."/>
        </authorList>
    </citation>
    <scope>NUCLEAR LOCALIZATION SIGNAL</scope>
</reference>
<reference key="11">
    <citation type="journal article" date="2001" name="J. Mol. Biol.">
        <title>Stoichiometry of the Sm proteins in yeast spliceosomal snRNPs supports the heptamer ring model of the core domain.</title>
        <authorList>
            <person name="Walke S."/>
            <person name="Bragado-Nilsson E."/>
            <person name="Seraphin B."/>
            <person name="Nagai K."/>
        </authorList>
    </citation>
    <scope>SUBUNIT</scope>
</reference>
<reference key="12">
    <citation type="journal article" date="2002" name="Mol. Cell">
        <title>Composition and functional characterization of the yeast spliceosomal penta-snRNP.</title>
        <authorList>
            <person name="Stevens S.W."/>
            <person name="Ryan D.E."/>
            <person name="Ge H.Y."/>
            <person name="Moore R.E."/>
            <person name="Young M.K."/>
            <person name="Lee T.D."/>
            <person name="Abelson J."/>
        </authorList>
    </citation>
    <scope>CHARACTERIZATION OF THE SPLICEOSOME</scope>
</reference>
<reference key="13">
    <citation type="journal article" date="2002" name="Mol. Cell. Biol.">
        <title>Proteomics analysis reveals stable multiprotein complexes in both fission and budding yeasts containing Myb-related Cdc5p/Cef1p, novel pre-mRNA splicing factors, and snRNAs.</title>
        <authorList>
            <person name="Ohi M.D."/>
            <person name="Link A.J."/>
            <person name="Ren L."/>
            <person name="Jennings J.L."/>
            <person name="McDonald W.H."/>
            <person name="Gould K.L."/>
        </authorList>
    </citation>
    <scope>IDENTIFICATION IN THE CWC COMPLEX</scope>
    <scope>IDENTIFICATION BY MASS SPECTROMETRY</scope>
</reference>
<reference key="14">
    <citation type="journal article" date="2003" name="Mol. Cell">
        <title>Assigning function to yeast proteins by integration of technologies.</title>
        <authorList>
            <person name="Hazbun T.R."/>
            <person name="Malmstroem L."/>
            <person name="Anderson S."/>
            <person name="Graczyk B.J."/>
            <person name="Fox B."/>
            <person name="Riffle M."/>
            <person name="Sundin B.A."/>
            <person name="Aranda J.D."/>
            <person name="McDonald W.H."/>
            <person name="Chiu C.-H."/>
            <person name="Snydsman B.E."/>
            <person name="Bradley P."/>
            <person name="Muller E.G.D."/>
            <person name="Fields S."/>
            <person name="Baker D."/>
            <person name="Yates J.R. III"/>
            <person name="Davis T.N."/>
        </authorList>
    </citation>
    <scope>IDENTIFICATION BY MASS SPECTROMETRY</scope>
</reference>
<reference key="15">
    <citation type="journal article" date="2003" name="Nature">
        <title>Global analysis of protein expression in yeast.</title>
        <authorList>
            <person name="Ghaemmaghami S."/>
            <person name="Huh W.-K."/>
            <person name="Bower K."/>
            <person name="Howson R.W."/>
            <person name="Belle A."/>
            <person name="Dephoure N."/>
            <person name="O'Shea E.K."/>
            <person name="Weissman J.S."/>
        </authorList>
    </citation>
    <scope>LEVEL OF PROTEIN EXPRESSION [LARGE SCALE ANALYSIS]</scope>
</reference>
<evidence type="ECO:0000250" key="1">
    <source>
        <dbReference type="UniProtKB" id="O42661"/>
    </source>
</evidence>
<evidence type="ECO:0000255" key="2"/>
<evidence type="ECO:0000255" key="3">
    <source>
        <dbReference type="PROSITE-ProRule" id="PRU01346"/>
    </source>
</evidence>
<evidence type="ECO:0000256" key="4">
    <source>
        <dbReference type="SAM" id="MobiDB-lite"/>
    </source>
</evidence>
<evidence type="ECO:0000269" key="5">
    <source>
    </source>
</evidence>
<evidence type="ECO:0000269" key="6">
    <source>
    </source>
</evidence>
<evidence type="ECO:0000269" key="7">
    <source>
    </source>
</evidence>
<evidence type="ECO:0000269" key="8">
    <source>
    </source>
</evidence>
<evidence type="ECO:0000269" key="9">
    <source>
    </source>
</evidence>
<evidence type="ECO:0000269" key="10">
    <source>
    </source>
</evidence>
<evidence type="ECO:0000305" key="11"/>
<evidence type="ECO:0007829" key="12">
    <source>
        <dbReference type="PDB" id="6J6G"/>
    </source>
</evidence>
<evidence type="ECO:0007829" key="13">
    <source>
        <dbReference type="PDB" id="9DTR"/>
    </source>
</evidence>